<evidence type="ECO:0000255" key="1">
    <source>
        <dbReference type="HAMAP-Rule" id="MF_04139"/>
    </source>
</evidence>
<evidence type="ECO:0000255" key="2">
    <source>
        <dbReference type="PROSITE-ProRule" id="PRU01340"/>
    </source>
</evidence>
<evidence type="ECO:0000303" key="3">
    <source>
    </source>
</evidence>
<sequence length="698" mass="77948">MMELITELFDEDTTLPITNLNPKKKIPQIFSVHVDDAIEQPGFRLCTYTSGGDTNRDLKMGDKMMHIVPFTLTAKGSIAKLKGLGPSPINYINSVFTVAMQTMRQYKIDACMLRILKSKTAGQARQIQVIADRLIRSRSGGRYVLLKELWDYDKKYAYILIHRKNVSLEDIPGVPEISTELFTKVESKVGDVYINKDTGAQVTKNEAIAASIAQENDKRSDQAVIVKVKISRRAIAQSQSLESSRFESELFQKYESTAANFNKPATAPLIPEAEEMKLGINSLASKTKAAKIIAEGTANELHYDYKFFSKSEVNEVSEKIKDVILNAIKNEPTTSIKCLEKYAAAVNQFFEEYKDNWLDKHNKTRKGQPDEVWGEITKNAWNAAKTKFLKRMIYSFSGIGAGPMIDITIARDGSKYTPSQKRGIREYCGSGYTDINNLLLGRYNPERYDVMSEKEIESAINNLDSAFENGDRIPEGITVYRAQSMTAPIYEALVKNKVFYFRNFVSTSLTPIIFGRFGITHAGIGLLEPEARNELTVDKNEEGITINPNEIRAYKENPEYVKVQIGWAIDGAHKVNVVYPGSLGIATEAEVILPRGLMVKVNKITDASNNDGTTSNNTKLIQAEVMTTEELTESVIYDGDCLMETGEVVAMTGDIEIEDRVDFASFVSSNVKQKVESSLGIIASCIDITNMPYKFVQG</sequence>
<comment type="function">
    <text evidence="1">ADP-ribosyltransferase that efficiently ADP-ribosylates one of the two alpha subunits of host RNA polymerase RPOA on an arginine located in the C-terminal region. ADP-ribosylation of RPOA alpha subunit enhances the transcription of viral early genes. Also ribosylates RPOA subunits beta, beta' and sigma 70 and performs an autoribosylation reaction.</text>
</comment>
<comment type="catalytic activity">
    <reaction evidence="1">
        <text>L-arginyl-[protein] + NAD(+) = N(omega)-(ADP-D-ribosyl)-L-arginyl-[protein] + nicotinamide + H(+)</text>
        <dbReference type="Rhea" id="RHEA:19149"/>
        <dbReference type="Rhea" id="RHEA-COMP:10532"/>
        <dbReference type="Rhea" id="RHEA-COMP:15087"/>
        <dbReference type="ChEBI" id="CHEBI:15378"/>
        <dbReference type="ChEBI" id="CHEBI:17154"/>
        <dbReference type="ChEBI" id="CHEBI:29965"/>
        <dbReference type="ChEBI" id="CHEBI:57540"/>
        <dbReference type="ChEBI" id="CHEBI:142554"/>
        <dbReference type="EC" id="2.4.2.31"/>
    </reaction>
    <physiologicalReaction direction="left-to-right" evidence="1">
        <dbReference type="Rhea" id="RHEA:19150"/>
    </physiologicalReaction>
</comment>
<comment type="subcellular location">
    <subcellularLocation>
        <location evidence="1">Virion</location>
    </subcellularLocation>
    <text evidence="1">About 25-50 copies per virion. This protein is injected into the bacterial cell along with the viral DNA.</text>
</comment>
<comment type="PTM">
    <text evidence="1">Proteolytic cleavages at the N- and C-termini by the prohead core protein protease give rise to the mature enzyme.</text>
</comment>
<comment type="similarity">
    <text evidence="1">Belongs to the Tevenvirinae NAD(+)--arginine ADP-ribosyltransferase family.</text>
</comment>
<keyword id="KW-0328">Glycosyltransferase</keyword>
<keyword id="KW-0520">NAD</keyword>
<keyword id="KW-0548">Nucleotidyltransferase</keyword>
<keyword id="KW-0808">Transferase</keyword>
<keyword id="KW-0946">Virion</keyword>
<proteinExistence type="inferred from homology"/>
<reference key="1">
    <citation type="journal article" date="1994" name="Virology">
        <title>The ADP-ribosyltransferases (gpAlt) of bacteriophages T2, T4, and T6: sequencing of the genes and comparison of their products.</title>
        <authorList>
            <person name="Koch T."/>
            <person name="Rueger W."/>
        </authorList>
    </citation>
    <scope>NUCLEOTIDE SEQUENCE [GENOMIC DNA]</scope>
    <scope>IDENTIFICATION</scope>
    <source>
        <strain>WT</strain>
    </source>
</reference>
<protein>
    <recommendedName>
        <fullName evidence="1">NAD(+)--arginine ADP-ribosyltransferase</fullName>
        <ecNumber evidence="1">2.4.2.31</ecNumber>
    </recommendedName>
    <alternativeName>
        <fullName evidence="3">Alt protein</fullName>
    </alternativeName>
    <component>
        <recommendedName>
            <fullName>Mature NAD(+)--arginine ADP-ribosyltransferase</fullName>
        </recommendedName>
    </component>
</protein>
<organismHost>
    <name type="scientific">Escherichia coli</name>
    <dbReference type="NCBI Taxonomy" id="562"/>
</organismHost>
<accession>Q38433</accession>
<organism>
    <name type="scientific">Enterobacteria phage T6</name>
    <name type="common">Bacteriophage T6</name>
    <dbReference type="NCBI Taxonomy" id="10666"/>
    <lineage>
        <taxon>Viruses</taxon>
        <taxon>Duplodnaviria</taxon>
        <taxon>Heunggongvirae</taxon>
        <taxon>Uroviricota</taxon>
        <taxon>Caudoviricetes</taxon>
        <taxon>Straboviridae</taxon>
        <taxon>Tevenvirinae</taxon>
        <taxon>Tequatrovirus</taxon>
        <taxon>Tequatrovirus T6</taxon>
    </lineage>
</organism>
<feature type="chain" id="PRO_0000460674" description="NAD(+)--arginine ADP-ribosyltransferase" evidence="1">
    <location>
        <begin position="1"/>
        <end position="698"/>
    </location>
</feature>
<feature type="chain" id="PRO_0000164917" description="Mature NAD(+)--arginine ADP-ribosyltransferase" evidence="1">
    <location>
        <begin position="8"/>
        <end position="698"/>
    </location>
</feature>
<feature type="domain" description="TR mART core" evidence="2">
    <location>
        <begin position="375"/>
        <end position="628"/>
    </location>
</feature>
<feature type="active site" evidence="2">
    <location>
        <position position="481"/>
    </location>
</feature>
<feature type="active site" evidence="2">
    <location>
        <position position="506"/>
    </location>
</feature>
<feature type="active site" evidence="2">
    <location>
        <position position="590"/>
    </location>
</feature>
<feature type="site" description="Cleavage" evidence="1">
    <location>
        <begin position="7"/>
        <end position="8"/>
    </location>
</feature>
<feature type="site" description="Cleavage" evidence="1">
    <location>
        <begin position="633"/>
        <end position="634"/>
    </location>
</feature>
<name>ALT_BPT6</name>
<gene>
    <name type="primary">alt</name>
</gene>
<dbReference type="EC" id="2.4.2.31" evidence="1"/>
<dbReference type="EMBL" id="X69894">
    <property type="protein sequence ID" value="CAA49518.1"/>
    <property type="molecule type" value="Genomic_DNA"/>
</dbReference>
<dbReference type="PIR" id="S31714">
    <property type="entry name" value="S31714"/>
</dbReference>
<dbReference type="GO" id="GO:0005576">
    <property type="term" value="C:extracellular region"/>
    <property type="evidence" value="ECO:0007669"/>
    <property type="project" value="InterPro"/>
</dbReference>
<dbReference type="GO" id="GO:0044423">
    <property type="term" value="C:virion component"/>
    <property type="evidence" value="ECO:0007669"/>
    <property type="project" value="UniProtKB-UniRule"/>
</dbReference>
<dbReference type="GO" id="GO:0106274">
    <property type="term" value="F:NAD+-protein-arginine ADP-ribosyltransferase activity"/>
    <property type="evidence" value="ECO:0007669"/>
    <property type="project" value="UniProtKB-UniRule"/>
</dbReference>
<dbReference type="GO" id="GO:0016779">
    <property type="term" value="F:nucleotidyltransferase activity"/>
    <property type="evidence" value="ECO:0007669"/>
    <property type="project" value="UniProtKB-KW"/>
</dbReference>
<dbReference type="GO" id="GO:0046782">
    <property type="term" value="P:regulation of viral transcription"/>
    <property type="evidence" value="ECO:0007669"/>
    <property type="project" value="UniProtKB-UniRule"/>
</dbReference>
<dbReference type="CDD" id="cd00233">
    <property type="entry name" value="VIP2"/>
    <property type="match status" value="1"/>
</dbReference>
<dbReference type="Gene3D" id="3.90.176.10">
    <property type="entry name" value="Toxin ADP-ribosyltransferase, Chain A, domain 1"/>
    <property type="match status" value="1"/>
</dbReference>
<dbReference type="HAMAP" id="MF_04139">
    <property type="entry name" value="ALT_T4"/>
    <property type="match status" value="1"/>
</dbReference>
<dbReference type="InterPro" id="IPR003540">
    <property type="entry name" value="ADP-ribosyltransferase"/>
</dbReference>
<dbReference type="InterPro" id="IPR016225">
    <property type="entry name" value="Phage_T4_Alt-like"/>
</dbReference>
<dbReference type="Pfam" id="PF03496">
    <property type="entry name" value="ADPrib_exo_Tox"/>
    <property type="match status" value="1"/>
</dbReference>
<dbReference type="PIRSF" id="PIRSF000491">
    <property type="entry name" value="Alt_phage"/>
    <property type="match status" value="1"/>
</dbReference>
<dbReference type="SUPFAM" id="SSF56399">
    <property type="entry name" value="ADP-ribosylation"/>
    <property type="match status" value="1"/>
</dbReference>
<dbReference type="PROSITE" id="PS51996">
    <property type="entry name" value="TR_MART"/>
    <property type="match status" value="1"/>
</dbReference>